<comment type="function">
    <text>May be involved in cell wall biosynthesis. May act as a fucosyltransferase.</text>
</comment>
<comment type="pathway">
    <text>Protein modification; protein glycosylation.</text>
</comment>
<comment type="subcellular location">
    <subcellularLocation>
        <location evidence="1">Golgi apparatus</location>
        <location evidence="1">Golgi stack membrane</location>
        <topology evidence="1">Single-pass type II membrane protein</topology>
    </subcellularLocation>
    <text evidence="1">Membrane-bound form in trans cisternae of Golgi.</text>
</comment>
<comment type="tissue specificity">
    <text evidence="3">Expressed in leaves and stems.</text>
</comment>
<comment type="similarity">
    <text evidence="4">Belongs to the glycosyltransferase 37 family.</text>
</comment>
<comment type="sequence caution" evidence="4">
    <conflict type="erroneous gene model prediction">
        <sequence resource="EMBL-CDS" id="AAD39295"/>
    </conflict>
</comment>
<evidence type="ECO:0000250" key="1"/>
<evidence type="ECO:0000255" key="2"/>
<evidence type="ECO:0000269" key="3">
    <source>
    </source>
</evidence>
<evidence type="ECO:0000305" key="4"/>
<dbReference type="EC" id="2.4.1.-"/>
<dbReference type="EMBL" id="AC007576">
    <property type="protein sequence ID" value="AAD39295.1"/>
    <property type="status" value="ALT_SEQ"/>
    <property type="molecule type" value="Genomic_DNA"/>
</dbReference>
<dbReference type="EMBL" id="CP002684">
    <property type="protein sequence ID" value="AEE29107.1"/>
    <property type="molecule type" value="Genomic_DNA"/>
</dbReference>
<dbReference type="PIR" id="E86274">
    <property type="entry name" value="E86274"/>
</dbReference>
<dbReference type="RefSeq" id="NP_172863.3">
    <property type="nucleotide sequence ID" value="NM_101276.3"/>
</dbReference>
<dbReference type="SMR" id="Q9XI77"/>
<dbReference type="STRING" id="3702.Q9XI77"/>
<dbReference type="CAZy" id="GT37">
    <property type="family name" value="Glycosyltransferase Family 37"/>
</dbReference>
<dbReference type="GlyCosmos" id="Q9XI77">
    <property type="glycosylation" value="3 sites, No reported glycans"/>
</dbReference>
<dbReference type="GlyGen" id="Q9XI77">
    <property type="glycosylation" value="3 sites"/>
</dbReference>
<dbReference type="PaxDb" id="3702-AT1G14110.1"/>
<dbReference type="ProteomicsDB" id="228891"/>
<dbReference type="EnsemblPlants" id="AT1G14110.1">
    <property type="protein sequence ID" value="AT1G14110.1"/>
    <property type="gene ID" value="AT1G14110"/>
</dbReference>
<dbReference type="GeneID" id="837970"/>
<dbReference type="Gramene" id="AT1G14110.1">
    <property type="protein sequence ID" value="AT1G14110.1"/>
    <property type="gene ID" value="AT1G14110"/>
</dbReference>
<dbReference type="KEGG" id="ath:AT1G14110"/>
<dbReference type="Araport" id="AT1G14110"/>
<dbReference type="TAIR" id="AT1G14110">
    <property type="gene designation" value="FUT9"/>
</dbReference>
<dbReference type="eggNOG" id="ENOG502QTTA">
    <property type="taxonomic scope" value="Eukaryota"/>
</dbReference>
<dbReference type="HOGENOM" id="CLU_001992_2_1_1"/>
<dbReference type="InParanoid" id="Q9XI77"/>
<dbReference type="OMA" id="PEIGVTN"/>
<dbReference type="PhylomeDB" id="Q9XI77"/>
<dbReference type="BioCyc" id="ARA:AT1G14110-MONOMER"/>
<dbReference type="UniPathway" id="UPA00378"/>
<dbReference type="PRO" id="PR:Q9XI77"/>
<dbReference type="Proteomes" id="UP000006548">
    <property type="component" value="Chromosome 1"/>
</dbReference>
<dbReference type="ExpressionAtlas" id="Q9XI77">
    <property type="expression patterns" value="baseline and differential"/>
</dbReference>
<dbReference type="GO" id="GO:0032580">
    <property type="term" value="C:Golgi cisterna membrane"/>
    <property type="evidence" value="ECO:0007669"/>
    <property type="project" value="UniProtKB-SubCell"/>
</dbReference>
<dbReference type="GO" id="GO:0008417">
    <property type="term" value="F:fucosyltransferase activity"/>
    <property type="evidence" value="ECO:0000250"/>
    <property type="project" value="TAIR"/>
</dbReference>
<dbReference type="GO" id="GO:0008107">
    <property type="term" value="F:galactoside 2-alpha-L-fucosyltransferase activity"/>
    <property type="evidence" value="ECO:0007669"/>
    <property type="project" value="InterPro"/>
</dbReference>
<dbReference type="GO" id="GO:0042546">
    <property type="term" value="P:cell wall biogenesis"/>
    <property type="evidence" value="ECO:0007669"/>
    <property type="project" value="InterPro"/>
</dbReference>
<dbReference type="GO" id="GO:0071555">
    <property type="term" value="P:cell wall organization"/>
    <property type="evidence" value="ECO:0007669"/>
    <property type="project" value="UniProtKB-KW"/>
</dbReference>
<dbReference type="GO" id="GO:0006486">
    <property type="term" value="P:protein glycosylation"/>
    <property type="evidence" value="ECO:0007669"/>
    <property type="project" value="UniProtKB-UniPathway"/>
</dbReference>
<dbReference type="FunFam" id="3.40.50.11340:FF:000005">
    <property type="entry name" value="Galactoside 2-alpha-L-fucosyltransferase"/>
    <property type="match status" value="1"/>
</dbReference>
<dbReference type="Gene3D" id="3.40.50.11340">
    <property type="match status" value="1"/>
</dbReference>
<dbReference type="InterPro" id="IPR004938">
    <property type="entry name" value="XG_FTase"/>
</dbReference>
<dbReference type="PANTHER" id="PTHR31889">
    <property type="entry name" value="FUCOSYLTRANSFERASE 2-RELATED"/>
    <property type="match status" value="1"/>
</dbReference>
<dbReference type="PANTHER" id="PTHR31889:SF56">
    <property type="entry name" value="FUCOSYLTRANSFERASE 9-RELATED"/>
    <property type="match status" value="1"/>
</dbReference>
<dbReference type="Pfam" id="PF03254">
    <property type="entry name" value="XG_FTase"/>
    <property type="match status" value="2"/>
</dbReference>
<gene>
    <name type="primary">FUT9</name>
    <name type="ordered locus">At1g14110</name>
    <name type="ORF">F7A19.19</name>
</gene>
<organism>
    <name type="scientific">Arabidopsis thaliana</name>
    <name type="common">Mouse-ear cress</name>
    <dbReference type="NCBI Taxonomy" id="3702"/>
    <lineage>
        <taxon>Eukaryota</taxon>
        <taxon>Viridiplantae</taxon>
        <taxon>Streptophyta</taxon>
        <taxon>Embryophyta</taxon>
        <taxon>Tracheophyta</taxon>
        <taxon>Spermatophyta</taxon>
        <taxon>Magnoliopsida</taxon>
        <taxon>eudicotyledons</taxon>
        <taxon>Gunneridae</taxon>
        <taxon>Pentapetalae</taxon>
        <taxon>rosids</taxon>
        <taxon>malvids</taxon>
        <taxon>Brassicales</taxon>
        <taxon>Brassicaceae</taxon>
        <taxon>Camelineae</taxon>
        <taxon>Arabidopsis</taxon>
    </lineage>
</organism>
<name>FUT9_ARATH</name>
<protein>
    <recommendedName>
        <fullName>Probable fucosyltransferase 9</fullName>
        <shortName>AtFUT9</shortName>
        <ecNumber>2.4.1.-</ecNumber>
    </recommendedName>
</protein>
<keyword id="KW-0961">Cell wall biogenesis/degradation</keyword>
<keyword id="KW-0325">Glycoprotein</keyword>
<keyword id="KW-0328">Glycosyltransferase</keyword>
<keyword id="KW-0333">Golgi apparatus</keyword>
<keyword id="KW-0472">Membrane</keyword>
<keyword id="KW-1185">Reference proteome</keyword>
<keyword id="KW-0735">Signal-anchor</keyword>
<keyword id="KW-0808">Transferase</keyword>
<keyword id="KW-0812">Transmembrane</keyword>
<keyword id="KW-1133">Transmembrane helix</keyword>
<feature type="chain" id="PRO_0000193918" description="Probable fucosyltransferase 9">
    <location>
        <begin position="1"/>
        <end position="474"/>
    </location>
</feature>
<feature type="transmembrane region" description="Helical; Signal-anchor for type II membrane protein" evidence="2">
    <location>
        <begin position="1"/>
        <end position="21"/>
    </location>
</feature>
<feature type="topological domain" description="Lumenal" evidence="2">
    <location>
        <begin position="22"/>
        <end position="474"/>
    </location>
</feature>
<feature type="glycosylation site" description="N-linked (GlcNAc...) asparagine" evidence="2">
    <location>
        <position position="24"/>
    </location>
</feature>
<feature type="glycosylation site" description="N-linked (GlcNAc...) asparagine" evidence="2">
    <location>
        <position position="39"/>
    </location>
</feature>
<feature type="glycosylation site" description="N-linked (GlcNAc...) asparagine" evidence="2">
    <location>
        <position position="208"/>
    </location>
</feature>
<proteinExistence type="evidence at transcript level"/>
<accession>Q9XI77</accession>
<reference key="1">
    <citation type="journal article" date="2000" name="Nature">
        <title>Sequence and analysis of chromosome 1 of the plant Arabidopsis thaliana.</title>
        <authorList>
            <person name="Theologis A."/>
            <person name="Ecker J.R."/>
            <person name="Palm C.J."/>
            <person name="Federspiel N.A."/>
            <person name="Kaul S."/>
            <person name="White O."/>
            <person name="Alonso J."/>
            <person name="Altafi H."/>
            <person name="Araujo R."/>
            <person name="Bowman C.L."/>
            <person name="Brooks S.Y."/>
            <person name="Buehler E."/>
            <person name="Chan A."/>
            <person name="Chao Q."/>
            <person name="Chen H."/>
            <person name="Cheuk R.F."/>
            <person name="Chin C.W."/>
            <person name="Chung M.K."/>
            <person name="Conn L."/>
            <person name="Conway A.B."/>
            <person name="Conway A.R."/>
            <person name="Creasy T.H."/>
            <person name="Dewar K."/>
            <person name="Dunn P."/>
            <person name="Etgu P."/>
            <person name="Feldblyum T.V."/>
            <person name="Feng J.-D."/>
            <person name="Fong B."/>
            <person name="Fujii C.Y."/>
            <person name="Gill J.E."/>
            <person name="Goldsmith A.D."/>
            <person name="Haas B."/>
            <person name="Hansen N.F."/>
            <person name="Hughes B."/>
            <person name="Huizar L."/>
            <person name="Hunter J.L."/>
            <person name="Jenkins J."/>
            <person name="Johnson-Hopson C."/>
            <person name="Khan S."/>
            <person name="Khaykin E."/>
            <person name="Kim C.J."/>
            <person name="Koo H.L."/>
            <person name="Kremenetskaia I."/>
            <person name="Kurtz D.B."/>
            <person name="Kwan A."/>
            <person name="Lam B."/>
            <person name="Langin-Hooper S."/>
            <person name="Lee A."/>
            <person name="Lee J.M."/>
            <person name="Lenz C.A."/>
            <person name="Li J.H."/>
            <person name="Li Y.-P."/>
            <person name="Lin X."/>
            <person name="Liu S.X."/>
            <person name="Liu Z.A."/>
            <person name="Luros J.S."/>
            <person name="Maiti R."/>
            <person name="Marziali A."/>
            <person name="Militscher J."/>
            <person name="Miranda M."/>
            <person name="Nguyen M."/>
            <person name="Nierman W.C."/>
            <person name="Osborne B.I."/>
            <person name="Pai G."/>
            <person name="Peterson J."/>
            <person name="Pham P.K."/>
            <person name="Rizzo M."/>
            <person name="Rooney T."/>
            <person name="Rowley D."/>
            <person name="Sakano H."/>
            <person name="Salzberg S.L."/>
            <person name="Schwartz J.R."/>
            <person name="Shinn P."/>
            <person name="Southwick A.M."/>
            <person name="Sun H."/>
            <person name="Tallon L.J."/>
            <person name="Tambunga G."/>
            <person name="Toriumi M.J."/>
            <person name="Town C.D."/>
            <person name="Utterback T."/>
            <person name="Van Aken S."/>
            <person name="Vaysberg M."/>
            <person name="Vysotskaia V.S."/>
            <person name="Walker M."/>
            <person name="Wu D."/>
            <person name="Yu G."/>
            <person name="Fraser C.M."/>
            <person name="Venter J.C."/>
            <person name="Davis R.W."/>
        </authorList>
    </citation>
    <scope>NUCLEOTIDE SEQUENCE [LARGE SCALE GENOMIC DNA]</scope>
    <source>
        <strain>cv. Columbia</strain>
    </source>
</reference>
<reference key="2">
    <citation type="journal article" date="2017" name="Plant J.">
        <title>Araport11: a complete reannotation of the Arabidopsis thaliana reference genome.</title>
        <authorList>
            <person name="Cheng C.Y."/>
            <person name="Krishnakumar V."/>
            <person name="Chan A.P."/>
            <person name="Thibaud-Nissen F."/>
            <person name="Schobel S."/>
            <person name="Town C.D."/>
        </authorList>
    </citation>
    <scope>GENOME REANNOTATION</scope>
    <source>
        <strain>cv. Columbia</strain>
    </source>
</reference>
<reference key="3">
    <citation type="journal article" date="2001" name="Plant Physiol.">
        <title>Characterization of a family of Arabidopsis genes related to xyloglucan fucosyltransferase1.</title>
        <authorList>
            <person name="Sarria R."/>
            <person name="Wagner T.A."/>
            <person name="O'Neill M.A."/>
            <person name="Faik A."/>
            <person name="Wilkerson C.G."/>
            <person name="Keegstra K."/>
            <person name="Raikhel N.V."/>
        </authorList>
    </citation>
    <scope>IDENTIFICATION AS A PUTATIVE FUCOSYLTRANSFERASE</scope>
    <scope>TISSUE SPECIFICITY</scope>
</reference>
<sequence length="474" mass="54476">MIKLTIAIATCLVLCLVLLLPSSNISYRHKYDLPTNGLNDSEQQSEKLLGGLLATGFEEKSCLSRYDQSMSKPSPYKPSRHIVSKLRSYEMLHKRCGPGTKAYKRATKQLGHNELSSSGDECRYVVWMPMFGLGNRMLSLVSVFLYALLTDRVMLVDQRNDITDLFCEPFPETSWLLPLDFPLNDQLDSFNREHSRCYGTMLKNHGINSTSIIPSHLYLDIFHDSRDHDKKFFCEEDQAFLDKVTWLVVKSNLYFVPSLWMIPSFQTKLIKLFPQKETVFHHLARYLFHPTNQVWGMVTRSYNAYLSRADERLGIQVRVFSKPVGYFQHVMDQILYSDHLKNMFLEQASSTGETIEVYQPSGEKIQQTDKKLHDQKALAEIYLLSLTDELVTSTRSTFGYVAQGLGGLKPWILYEPRDKKTPNPPCVRAMSMEPCFLRAPLHGCQAKTIKIPPFVRICEDWKTGLKLVDVSDEL</sequence>